<sequence>MKVAVLGAAGGIGQALALLLKTQLPAGSHLSLYDIAPVTPGVAVDLSHIPTAVEIKGFAGEDPTPALVGADVVLISAGVARKPGMDRSDLFNINAGIVRNLIEKVAATCPTALVGIITNPVNTTVAIAAEVMKKAGVYDKNRLFGITTLDVIRSETFIAELKGLNVADVKVNVIGGHSGVTILPLLSQVEGATFTDEEVASLTTRIQNAGTEVVEAKAGGGSATLSMGQAACRFGLSLVRGLQGEANIVECAYVDGGSEHAEFFAQPVLLGKNGIEKVLPYGEVSAFEANARDSMLDTLKGDIKLGVDFVK</sequence>
<name>MDH_SHEB2</name>
<feature type="chain" id="PRO_1000185080" description="Malate dehydrogenase">
    <location>
        <begin position="1"/>
        <end position="311"/>
    </location>
</feature>
<feature type="active site" description="Proton acceptor" evidence="1">
    <location>
        <position position="177"/>
    </location>
</feature>
<feature type="binding site" evidence="1">
    <location>
        <begin position="7"/>
        <end position="13"/>
    </location>
    <ligand>
        <name>NAD(+)</name>
        <dbReference type="ChEBI" id="CHEBI:57540"/>
    </ligand>
</feature>
<feature type="binding site" evidence="1">
    <location>
        <position position="34"/>
    </location>
    <ligand>
        <name>NAD(+)</name>
        <dbReference type="ChEBI" id="CHEBI:57540"/>
    </ligand>
</feature>
<feature type="binding site" evidence="1">
    <location>
        <position position="81"/>
    </location>
    <ligand>
        <name>substrate</name>
    </ligand>
</feature>
<feature type="binding site" evidence="1">
    <location>
        <position position="87"/>
    </location>
    <ligand>
        <name>substrate</name>
    </ligand>
</feature>
<feature type="binding site" evidence="1">
    <location>
        <position position="94"/>
    </location>
    <ligand>
        <name>NAD(+)</name>
        <dbReference type="ChEBI" id="CHEBI:57540"/>
    </ligand>
</feature>
<feature type="binding site" evidence="1">
    <location>
        <begin position="117"/>
        <end position="119"/>
    </location>
    <ligand>
        <name>NAD(+)</name>
        <dbReference type="ChEBI" id="CHEBI:57540"/>
    </ligand>
</feature>
<feature type="binding site" evidence="1">
    <location>
        <position position="119"/>
    </location>
    <ligand>
        <name>substrate</name>
    </ligand>
</feature>
<feature type="binding site" evidence="1">
    <location>
        <position position="153"/>
    </location>
    <ligand>
        <name>substrate</name>
    </ligand>
</feature>
<feature type="binding site" evidence="1">
    <location>
        <position position="227"/>
    </location>
    <ligand>
        <name>NAD(+)</name>
        <dbReference type="ChEBI" id="CHEBI:57540"/>
    </ligand>
</feature>
<comment type="function">
    <text evidence="1">Catalyzes the reversible oxidation of malate to oxaloacetate.</text>
</comment>
<comment type="catalytic activity">
    <reaction evidence="1">
        <text>(S)-malate + NAD(+) = oxaloacetate + NADH + H(+)</text>
        <dbReference type="Rhea" id="RHEA:21432"/>
        <dbReference type="ChEBI" id="CHEBI:15378"/>
        <dbReference type="ChEBI" id="CHEBI:15589"/>
        <dbReference type="ChEBI" id="CHEBI:16452"/>
        <dbReference type="ChEBI" id="CHEBI:57540"/>
        <dbReference type="ChEBI" id="CHEBI:57945"/>
        <dbReference type="EC" id="1.1.1.37"/>
    </reaction>
</comment>
<comment type="subunit">
    <text evidence="1">Homodimer.</text>
</comment>
<comment type="similarity">
    <text evidence="1">Belongs to the LDH/MDH superfamily. MDH type 1 family.</text>
</comment>
<dbReference type="EC" id="1.1.1.37" evidence="1"/>
<dbReference type="EMBL" id="CP001252">
    <property type="protein sequence ID" value="ACK48106.1"/>
    <property type="molecule type" value="Genomic_DNA"/>
</dbReference>
<dbReference type="RefSeq" id="WP_006080176.1">
    <property type="nucleotide sequence ID" value="NC_011663.1"/>
</dbReference>
<dbReference type="SMR" id="B8EB55"/>
<dbReference type="KEGG" id="sbp:Sbal223_3627"/>
<dbReference type="HOGENOM" id="CLU_047181_0_1_6"/>
<dbReference type="Proteomes" id="UP000002507">
    <property type="component" value="Chromosome"/>
</dbReference>
<dbReference type="GO" id="GO:0005737">
    <property type="term" value="C:cytoplasm"/>
    <property type="evidence" value="ECO:0007669"/>
    <property type="project" value="TreeGrafter"/>
</dbReference>
<dbReference type="GO" id="GO:0030060">
    <property type="term" value="F:L-malate dehydrogenase (NAD+) activity"/>
    <property type="evidence" value="ECO:0007669"/>
    <property type="project" value="UniProtKB-UniRule"/>
</dbReference>
<dbReference type="GO" id="GO:0006108">
    <property type="term" value="P:malate metabolic process"/>
    <property type="evidence" value="ECO:0007669"/>
    <property type="project" value="InterPro"/>
</dbReference>
<dbReference type="GO" id="GO:0006099">
    <property type="term" value="P:tricarboxylic acid cycle"/>
    <property type="evidence" value="ECO:0007669"/>
    <property type="project" value="UniProtKB-UniRule"/>
</dbReference>
<dbReference type="CDD" id="cd01337">
    <property type="entry name" value="MDH_glyoxysomal_mitochondrial"/>
    <property type="match status" value="1"/>
</dbReference>
<dbReference type="FunFam" id="3.40.50.720:FF:000017">
    <property type="entry name" value="Malate dehydrogenase"/>
    <property type="match status" value="1"/>
</dbReference>
<dbReference type="FunFam" id="3.90.110.10:FF:000001">
    <property type="entry name" value="Malate dehydrogenase"/>
    <property type="match status" value="1"/>
</dbReference>
<dbReference type="Gene3D" id="3.90.110.10">
    <property type="entry name" value="Lactate dehydrogenase/glycoside hydrolase, family 4, C-terminal"/>
    <property type="match status" value="1"/>
</dbReference>
<dbReference type="Gene3D" id="3.40.50.720">
    <property type="entry name" value="NAD(P)-binding Rossmann-like Domain"/>
    <property type="match status" value="1"/>
</dbReference>
<dbReference type="HAMAP" id="MF_01516">
    <property type="entry name" value="Malate_dehydrog_1"/>
    <property type="match status" value="1"/>
</dbReference>
<dbReference type="InterPro" id="IPR001557">
    <property type="entry name" value="L-lactate/malate_DH"/>
</dbReference>
<dbReference type="InterPro" id="IPR022383">
    <property type="entry name" value="Lactate/malate_DH_C"/>
</dbReference>
<dbReference type="InterPro" id="IPR001236">
    <property type="entry name" value="Lactate/malate_DH_N"/>
</dbReference>
<dbReference type="InterPro" id="IPR015955">
    <property type="entry name" value="Lactate_DH/Glyco_Ohase_4_C"/>
</dbReference>
<dbReference type="InterPro" id="IPR001252">
    <property type="entry name" value="Malate_DH_AS"/>
</dbReference>
<dbReference type="InterPro" id="IPR010097">
    <property type="entry name" value="Malate_DH_type1"/>
</dbReference>
<dbReference type="InterPro" id="IPR023958">
    <property type="entry name" value="Malate_DH_type1_bac"/>
</dbReference>
<dbReference type="InterPro" id="IPR036291">
    <property type="entry name" value="NAD(P)-bd_dom_sf"/>
</dbReference>
<dbReference type="NCBIfam" id="TIGR01772">
    <property type="entry name" value="MDH_euk_gproteo"/>
    <property type="match status" value="1"/>
</dbReference>
<dbReference type="PANTHER" id="PTHR11540">
    <property type="entry name" value="MALATE AND LACTATE DEHYDROGENASE"/>
    <property type="match status" value="1"/>
</dbReference>
<dbReference type="PANTHER" id="PTHR11540:SF16">
    <property type="entry name" value="MALATE DEHYDROGENASE, MITOCHONDRIAL"/>
    <property type="match status" value="1"/>
</dbReference>
<dbReference type="Pfam" id="PF02866">
    <property type="entry name" value="Ldh_1_C"/>
    <property type="match status" value="1"/>
</dbReference>
<dbReference type="Pfam" id="PF00056">
    <property type="entry name" value="Ldh_1_N"/>
    <property type="match status" value="1"/>
</dbReference>
<dbReference type="PIRSF" id="PIRSF000102">
    <property type="entry name" value="Lac_mal_DH"/>
    <property type="match status" value="1"/>
</dbReference>
<dbReference type="SUPFAM" id="SSF56327">
    <property type="entry name" value="LDH C-terminal domain-like"/>
    <property type="match status" value="1"/>
</dbReference>
<dbReference type="SUPFAM" id="SSF51735">
    <property type="entry name" value="NAD(P)-binding Rossmann-fold domains"/>
    <property type="match status" value="1"/>
</dbReference>
<dbReference type="PROSITE" id="PS00068">
    <property type="entry name" value="MDH"/>
    <property type="match status" value="1"/>
</dbReference>
<proteinExistence type="inferred from homology"/>
<protein>
    <recommendedName>
        <fullName evidence="1">Malate dehydrogenase</fullName>
        <ecNumber evidence="1">1.1.1.37</ecNumber>
    </recommendedName>
</protein>
<gene>
    <name evidence="1" type="primary">mdh</name>
    <name type="ordered locus">Sbal223_3627</name>
</gene>
<evidence type="ECO:0000255" key="1">
    <source>
        <dbReference type="HAMAP-Rule" id="MF_01516"/>
    </source>
</evidence>
<organism>
    <name type="scientific">Shewanella baltica (strain OS223)</name>
    <dbReference type="NCBI Taxonomy" id="407976"/>
    <lineage>
        <taxon>Bacteria</taxon>
        <taxon>Pseudomonadati</taxon>
        <taxon>Pseudomonadota</taxon>
        <taxon>Gammaproteobacteria</taxon>
        <taxon>Alteromonadales</taxon>
        <taxon>Shewanellaceae</taxon>
        <taxon>Shewanella</taxon>
    </lineage>
</organism>
<keyword id="KW-0520">NAD</keyword>
<keyword id="KW-0560">Oxidoreductase</keyword>
<keyword id="KW-0816">Tricarboxylic acid cycle</keyword>
<accession>B8EB55</accession>
<reference key="1">
    <citation type="submission" date="2008-12" db="EMBL/GenBank/DDBJ databases">
        <title>Complete sequence of chromosome of Shewanella baltica OS223.</title>
        <authorList>
            <consortium name="US DOE Joint Genome Institute"/>
            <person name="Lucas S."/>
            <person name="Copeland A."/>
            <person name="Lapidus A."/>
            <person name="Glavina del Rio T."/>
            <person name="Dalin E."/>
            <person name="Tice H."/>
            <person name="Bruce D."/>
            <person name="Goodwin L."/>
            <person name="Pitluck S."/>
            <person name="Chertkov O."/>
            <person name="Meincke L."/>
            <person name="Brettin T."/>
            <person name="Detter J.C."/>
            <person name="Han C."/>
            <person name="Kuske C.R."/>
            <person name="Larimer F."/>
            <person name="Land M."/>
            <person name="Hauser L."/>
            <person name="Kyrpides N."/>
            <person name="Ovchinnikova G."/>
            <person name="Brettar I."/>
            <person name="Rodrigues J."/>
            <person name="Konstantinidis K."/>
            <person name="Tiedje J."/>
        </authorList>
    </citation>
    <scope>NUCLEOTIDE SEQUENCE [LARGE SCALE GENOMIC DNA]</scope>
    <source>
        <strain>OS223</strain>
    </source>
</reference>